<gene>
    <name evidence="1" type="primary">ileS2</name>
    <name type="ordered locus">BT9727_1995</name>
</gene>
<feature type="chain" id="PRO_0000098519" description="Isoleucine--tRNA ligase 2">
    <location>
        <begin position="1"/>
        <end position="1033"/>
    </location>
</feature>
<feature type="short sequence motif" description="'HIGH' region">
    <location>
        <begin position="47"/>
        <end position="57"/>
    </location>
</feature>
<feature type="short sequence motif" description="'KMSKS' region">
    <location>
        <begin position="590"/>
        <end position="594"/>
    </location>
</feature>
<feature type="binding site" evidence="1">
    <location>
        <position position="593"/>
    </location>
    <ligand>
        <name>ATP</name>
        <dbReference type="ChEBI" id="CHEBI:30616"/>
    </ligand>
</feature>
<proteinExistence type="inferred from homology"/>
<reference key="1">
    <citation type="journal article" date="2006" name="J. Bacteriol.">
        <title>Pathogenomic sequence analysis of Bacillus cereus and Bacillus thuringiensis isolates closely related to Bacillus anthracis.</title>
        <authorList>
            <person name="Han C.S."/>
            <person name="Xie G."/>
            <person name="Challacombe J.F."/>
            <person name="Altherr M.R."/>
            <person name="Bhotika S.S."/>
            <person name="Bruce D."/>
            <person name="Campbell C.S."/>
            <person name="Campbell M.L."/>
            <person name="Chen J."/>
            <person name="Chertkov O."/>
            <person name="Cleland C."/>
            <person name="Dimitrijevic M."/>
            <person name="Doggett N.A."/>
            <person name="Fawcett J.J."/>
            <person name="Glavina T."/>
            <person name="Goodwin L.A."/>
            <person name="Hill K.K."/>
            <person name="Hitchcock P."/>
            <person name="Jackson P.J."/>
            <person name="Keim P."/>
            <person name="Kewalramani A.R."/>
            <person name="Longmire J."/>
            <person name="Lucas S."/>
            <person name="Malfatti S."/>
            <person name="McMurry K."/>
            <person name="Meincke L.J."/>
            <person name="Misra M."/>
            <person name="Moseman B.L."/>
            <person name="Mundt M."/>
            <person name="Munk A.C."/>
            <person name="Okinaka R.T."/>
            <person name="Parson-Quintana B."/>
            <person name="Reilly L.P."/>
            <person name="Richardson P."/>
            <person name="Robinson D.L."/>
            <person name="Rubin E."/>
            <person name="Saunders E."/>
            <person name="Tapia R."/>
            <person name="Tesmer J.G."/>
            <person name="Thayer N."/>
            <person name="Thompson L.S."/>
            <person name="Tice H."/>
            <person name="Ticknor L.O."/>
            <person name="Wills P.L."/>
            <person name="Brettin T.S."/>
            <person name="Gilna P."/>
        </authorList>
    </citation>
    <scope>NUCLEOTIDE SEQUENCE [LARGE SCALE GENOMIC DNA]</scope>
    <source>
        <strain>97-27</strain>
    </source>
</reference>
<keyword id="KW-0030">Aminoacyl-tRNA synthetase</keyword>
<keyword id="KW-0067">ATP-binding</keyword>
<keyword id="KW-0963">Cytoplasm</keyword>
<keyword id="KW-0436">Ligase</keyword>
<keyword id="KW-0479">Metal-binding</keyword>
<keyword id="KW-0547">Nucleotide-binding</keyword>
<keyword id="KW-0648">Protein biosynthesis</keyword>
<keyword id="KW-0862">Zinc</keyword>
<evidence type="ECO:0000255" key="1">
    <source>
        <dbReference type="HAMAP-Rule" id="MF_02003"/>
    </source>
</evidence>
<organism>
    <name type="scientific">Bacillus thuringiensis subsp. konkukian (strain 97-27)</name>
    <dbReference type="NCBI Taxonomy" id="281309"/>
    <lineage>
        <taxon>Bacteria</taxon>
        <taxon>Bacillati</taxon>
        <taxon>Bacillota</taxon>
        <taxon>Bacilli</taxon>
        <taxon>Bacillales</taxon>
        <taxon>Bacillaceae</taxon>
        <taxon>Bacillus</taxon>
        <taxon>Bacillus cereus group</taxon>
    </lineage>
</organism>
<accession>Q6HJF2</accession>
<name>SYI2_BACHK</name>
<protein>
    <recommendedName>
        <fullName evidence="1">Isoleucine--tRNA ligase 2</fullName>
        <ecNumber evidence="1">6.1.1.5</ecNumber>
    </recommendedName>
    <alternativeName>
        <fullName evidence="1">Isoleucyl-tRNA synthetase 2</fullName>
        <shortName evidence="1">IleRS 2</shortName>
    </alternativeName>
</protein>
<comment type="function">
    <text evidence="1">Catalyzes the attachment of isoleucine to tRNA(Ile). As IleRS can inadvertently accommodate and process structurally similar amino acids such as valine, to avoid such errors it has two additional distinct tRNA(Ile)-dependent editing activities. One activity is designated as 'pretransfer' editing and involves the hydrolysis of activated Val-AMP. The other activity is designated 'posttransfer' editing and involves deacylation of mischarged Val-tRNA(Ile).</text>
</comment>
<comment type="catalytic activity">
    <reaction evidence="1">
        <text>tRNA(Ile) + L-isoleucine + ATP = L-isoleucyl-tRNA(Ile) + AMP + diphosphate</text>
        <dbReference type="Rhea" id="RHEA:11060"/>
        <dbReference type="Rhea" id="RHEA-COMP:9666"/>
        <dbReference type="Rhea" id="RHEA-COMP:9695"/>
        <dbReference type="ChEBI" id="CHEBI:30616"/>
        <dbReference type="ChEBI" id="CHEBI:33019"/>
        <dbReference type="ChEBI" id="CHEBI:58045"/>
        <dbReference type="ChEBI" id="CHEBI:78442"/>
        <dbReference type="ChEBI" id="CHEBI:78528"/>
        <dbReference type="ChEBI" id="CHEBI:456215"/>
        <dbReference type="EC" id="6.1.1.5"/>
    </reaction>
</comment>
<comment type="cofactor">
    <cofactor evidence="1">
        <name>Zn(2+)</name>
        <dbReference type="ChEBI" id="CHEBI:29105"/>
    </cofactor>
</comment>
<comment type="subunit">
    <text evidence="1">Monomer.</text>
</comment>
<comment type="subcellular location">
    <subcellularLocation>
        <location evidence="1">Cytoplasm</location>
    </subcellularLocation>
</comment>
<comment type="domain">
    <text evidence="1">IleRS has two distinct active sites: one for aminoacylation and one for editing. The misactivated valine is translocated from the active site to the editing site, which sterically excludes the correctly activated isoleucine. The single editing site contains two valyl binding pockets, one specific for each substrate (Val-AMP or Val-tRNA(Ile)).</text>
</comment>
<comment type="similarity">
    <text evidence="1">Belongs to the class-I aminoacyl-tRNA synthetase family. IleS type 2 subfamily.</text>
</comment>
<dbReference type="EC" id="6.1.1.5" evidence="1"/>
<dbReference type="EMBL" id="AE017355">
    <property type="protein sequence ID" value="AAT59742.1"/>
    <property type="molecule type" value="Genomic_DNA"/>
</dbReference>
<dbReference type="RefSeq" id="WP_000754926.1">
    <property type="nucleotide sequence ID" value="NC_005957.1"/>
</dbReference>
<dbReference type="RefSeq" id="YP_036324.1">
    <property type="nucleotide sequence ID" value="NC_005957.1"/>
</dbReference>
<dbReference type="SMR" id="Q6HJF2"/>
<dbReference type="KEGG" id="btk:BT9727_1995"/>
<dbReference type="PATRIC" id="fig|281309.8.peg.2099"/>
<dbReference type="HOGENOM" id="CLU_001493_1_1_9"/>
<dbReference type="Proteomes" id="UP000001301">
    <property type="component" value="Chromosome"/>
</dbReference>
<dbReference type="GO" id="GO:0005737">
    <property type="term" value="C:cytoplasm"/>
    <property type="evidence" value="ECO:0007669"/>
    <property type="project" value="UniProtKB-SubCell"/>
</dbReference>
<dbReference type="GO" id="GO:0002161">
    <property type="term" value="F:aminoacyl-tRNA deacylase activity"/>
    <property type="evidence" value="ECO:0007669"/>
    <property type="project" value="InterPro"/>
</dbReference>
<dbReference type="GO" id="GO:0005524">
    <property type="term" value="F:ATP binding"/>
    <property type="evidence" value="ECO:0007669"/>
    <property type="project" value="UniProtKB-UniRule"/>
</dbReference>
<dbReference type="GO" id="GO:0004822">
    <property type="term" value="F:isoleucine-tRNA ligase activity"/>
    <property type="evidence" value="ECO:0007669"/>
    <property type="project" value="UniProtKB-UniRule"/>
</dbReference>
<dbReference type="GO" id="GO:0000049">
    <property type="term" value="F:tRNA binding"/>
    <property type="evidence" value="ECO:0007669"/>
    <property type="project" value="InterPro"/>
</dbReference>
<dbReference type="GO" id="GO:0008270">
    <property type="term" value="F:zinc ion binding"/>
    <property type="evidence" value="ECO:0007669"/>
    <property type="project" value="UniProtKB-UniRule"/>
</dbReference>
<dbReference type="GO" id="GO:0006428">
    <property type="term" value="P:isoleucyl-tRNA aminoacylation"/>
    <property type="evidence" value="ECO:0007669"/>
    <property type="project" value="UniProtKB-UniRule"/>
</dbReference>
<dbReference type="CDD" id="cd07961">
    <property type="entry name" value="Anticodon_Ia_Ile_ABEc"/>
    <property type="match status" value="1"/>
</dbReference>
<dbReference type="CDD" id="cd00818">
    <property type="entry name" value="IleRS_core"/>
    <property type="match status" value="1"/>
</dbReference>
<dbReference type="FunFam" id="1.10.730.10:FF:000038">
    <property type="entry name" value="Isoleucine--tRNA ligase"/>
    <property type="match status" value="1"/>
</dbReference>
<dbReference type="FunFam" id="3.40.50.620:FF:000063">
    <property type="entry name" value="Isoleucine--tRNA ligase"/>
    <property type="match status" value="1"/>
</dbReference>
<dbReference type="FunFam" id="3.40.50.620:FF:000075">
    <property type="entry name" value="Isoleucine--tRNA ligase"/>
    <property type="match status" value="1"/>
</dbReference>
<dbReference type="Gene3D" id="3.40.50.620">
    <property type="entry name" value="HUPs"/>
    <property type="match status" value="2"/>
</dbReference>
<dbReference type="Gene3D" id="1.10.730.10">
    <property type="entry name" value="Isoleucyl-tRNA Synthetase, Domain 1"/>
    <property type="match status" value="1"/>
</dbReference>
<dbReference type="HAMAP" id="MF_02003">
    <property type="entry name" value="Ile_tRNA_synth_type2"/>
    <property type="match status" value="1"/>
</dbReference>
<dbReference type="InterPro" id="IPR001412">
    <property type="entry name" value="aa-tRNA-synth_I_CS"/>
</dbReference>
<dbReference type="InterPro" id="IPR002300">
    <property type="entry name" value="aa-tRNA-synth_Ia"/>
</dbReference>
<dbReference type="InterPro" id="IPR033709">
    <property type="entry name" value="Anticodon_Ile_ABEc"/>
</dbReference>
<dbReference type="InterPro" id="IPR002301">
    <property type="entry name" value="Ile-tRNA-ligase"/>
</dbReference>
<dbReference type="InterPro" id="IPR023586">
    <property type="entry name" value="Ile-tRNA-ligase_type2"/>
</dbReference>
<dbReference type="InterPro" id="IPR013155">
    <property type="entry name" value="M/V/L/I-tRNA-synth_anticd-bd"/>
</dbReference>
<dbReference type="InterPro" id="IPR014729">
    <property type="entry name" value="Rossmann-like_a/b/a_fold"/>
</dbReference>
<dbReference type="InterPro" id="IPR009080">
    <property type="entry name" value="tRNAsynth_Ia_anticodon-bd"/>
</dbReference>
<dbReference type="InterPro" id="IPR009008">
    <property type="entry name" value="Val/Leu/Ile-tRNA-synth_edit"/>
</dbReference>
<dbReference type="NCBIfam" id="TIGR00392">
    <property type="entry name" value="ileS"/>
    <property type="match status" value="1"/>
</dbReference>
<dbReference type="PANTHER" id="PTHR42780:SF1">
    <property type="entry name" value="ISOLEUCINE--TRNA LIGASE, CYTOPLASMIC"/>
    <property type="match status" value="1"/>
</dbReference>
<dbReference type="PANTHER" id="PTHR42780">
    <property type="entry name" value="SOLEUCYL-TRNA SYNTHETASE"/>
    <property type="match status" value="1"/>
</dbReference>
<dbReference type="Pfam" id="PF08264">
    <property type="entry name" value="Anticodon_1"/>
    <property type="match status" value="1"/>
</dbReference>
<dbReference type="Pfam" id="PF19302">
    <property type="entry name" value="DUF5915"/>
    <property type="match status" value="1"/>
</dbReference>
<dbReference type="Pfam" id="PF00133">
    <property type="entry name" value="tRNA-synt_1"/>
    <property type="match status" value="1"/>
</dbReference>
<dbReference type="PRINTS" id="PR00984">
    <property type="entry name" value="TRNASYNTHILE"/>
</dbReference>
<dbReference type="SUPFAM" id="SSF47323">
    <property type="entry name" value="Anticodon-binding domain of a subclass of class I aminoacyl-tRNA synthetases"/>
    <property type="match status" value="2"/>
</dbReference>
<dbReference type="SUPFAM" id="SSF52374">
    <property type="entry name" value="Nucleotidylyl transferase"/>
    <property type="match status" value="1"/>
</dbReference>
<dbReference type="SUPFAM" id="SSF50677">
    <property type="entry name" value="ValRS/IleRS/LeuRS editing domain"/>
    <property type="match status" value="1"/>
</dbReference>
<dbReference type="PROSITE" id="PS00178">
    <property type="entry name" value="AA_TRNA_LIGASE_I"/>
    <property type="match status" value="1"/>
</dbReference>
<sequence>MKKVDVKESAVGRETRIRKQWNEQSIFEQSIQNREGAQSFVFYEGPPTANGLPHVGHALGRTIKDVVARYKTMAGYKVLRKAGWDTHGLPVELGVEKQLGISGKHEIEEYGIEPFTKKCKESVFTYEKQWREFTESIGYWVDMDDPYVTLENPYIESVWHILGTIHEKGLLYKGHRVSPYCPSCQTSLSSHEVAQGYKTVKDLSATVKFKVKDSENEYFLGWTTTPWTLPANVALAVHPNMEYVKAKQEGHVYIVAKERVQDVLKENYEVLSVHKGEELLNTSYTAPFPMKEVTNGYRVIGADFVTADSGTGLVHIAPAYGEDDYRVVQSEGLSFLHVVDEKGEYTEVVPFLKGKFVKDCDVDIVRYLAKEGLLYHKEKYEHSYPHCWRCDSPLLYYAGESWLIRTTAIKDTFLQNNDTVTWYPDHMKHGRFGKFLENMVDWNISRNRYWGTPLNVWECESCDHQFAPKSIADLRKHSTKETPEDLELHKPYVDEVQVSCEKCGSAMNRTPEVIDVWFDSGSMPFAQYHYPFENKELFEEQFPADVIAEGIDQTRGWFYSLLAVSALYTGKVPYKRVLSLGHVLDEEGQKMSKSKGNALDPVDLVGKFGADALRWALLVDSAPWNAKRFSERTVLEAKSKFVDTLVNVYSFYVLYANLDEYNPNETYDVKRTKLDEWVLSRLHSTTKKVRTALDDYQFTNAAREIAALVDEVSNWYVRRSRNRFWESGMNAEKAAAYETLHDVLVTISKLIAPFTPFVAEDIHLNLTGSSVHLEDYPVVNESLLQPKLEAEMDAVLQVVELGRSNRNQHSLKVKQPLAELVLLEHNENDMDWESYRDIVMDELNVKAFHVELDETKYTSYQLKLNFKKAGPKFGKNVNAVNGWLKQLSQDEVQNFVSTERAVYEAASGEEVVVTTEDVLVEKVAKSGFSNTTNGQYTVMLDTNVTEELLQEGVAREFIRAVQEYRKQLNLPVNLRVDVILDTEEELQQTLTNHKELLEENLLVKQFTFGHLTNEDDELSLGETKVRIKLSAAQ</sequence>